<keyword id="KW-0963">Cytoplasm</keyword>
<keyword id="KW-0235">DNA replication</keyword>
<keyword id="KW-0239">DNA-directed DNA polymerase</keyword>
<keyword id="KW-0269">Exonuclease</keyword>
<keyword id="KW-0378">Hydrolase</keyword>
<keyword id="KW-0540">Nuclease</keyword>
<keyword id="KW-0548">Nucleotidyltransferase</keyword>
<keyword id="KW-0808">Transferase</keyword>
<gene>
    <name evidence="1" type="primary">polC</name>
    <name type="ordered locus">MGAS10750_Spy1766</name>
</gene>
<evidence type="ECO:0000255" key="1">
    <source>
        <dbReference type="HAMAP-Rule" id="MF_00356"/>
    </source>
</evidence>
<proteinExistence type="inferred from homology"/>
<organism>
    <name type="scientific">Streptococcus pyogenes serotype M4 (strain MGAS10750)</name>
    <dbReference type="NCBI Taxonomy" id="370554"/>
    <lineage>
        <taxon>Bacteria</taxon>
        <taxon>Bacillati</taxon>
        <taxon>Bacillota</taxon>
        <taxon>Bacilli</taxon>
        <taxon>Lactobacillales</taxon>
        <taxon>Streptococcaceae</taxon>
        <taxon>Streptococcus</taxon>
    </lineage>
</organism>
<sequence length="1465" mass="164575">MSDLFAKLMDQIEMPLDMRRSSAFSSADIIEVKVHSVSRLWEFHFAFAAVLPIATYRELHDRLIRTFEAADIKVTFDIQAAQVDYSDDLLQAYYQEAFEHAPCNSASFKSSFSKLKVTYEDDKLIIAAPGFVNNDHFRNNHLPNLVKQFEAFGFGTLTIDMVSDQEMTEHLTKDFVSSRQALVKKAVQDNLEAQKSLEAMMPPVEEATPAPKFDYKERAAKRQAGFEKATITPMIEIETEENRIVFEGMVFDVERKTTRTGRHIINFKMTDYTSSFALQKWAKDDEELRKFDMIAKGAWLRVQGNIETNPFTKSLTMNVQQVKEIVHHERKDLMPEGQKRVELHAHTNMSTMDALPTVESLIDTAAKWGHKAVAITDHANVQSFPHGYHRARKAGIKAIFGLEANIVEDKVPISYDPVDMDLHEATYVVFDVETTGLSAMNNDLIQIAASKMFKGNIVEQFDEFIDPGHPLSAFTTELTGITDKHLQGAKPLVTVLKAFQDFCKDSILVAHNASFDVGFMNANYERHDLPKITQPVIDTLEFARNLYPEYKRHGLGPLTKRFQVSLDHHHMANYDAEATGRLLFIFLKDAREKHGIKNLLQLNTDLVAEDSYKKARIKHATIYVQNQVGLKNMFKLVSLSNIKYFEGVPRIPRTVLDAHREGLLLGTACSDGEVFDAVLTKGIDAAVDLAKYYDFIEIMPPAIYQPLVVRELIKDQAGIEQVIRDLIEVGKRANKLVLATGNVHYLEPEEEIYREIIVRSLGQGAMINRTIGRGEGAQPAPLPKAHFRTTNEMLDEFAFLGKDLAYQVVVENTQDFADRIEEVEVVKGDLYTPYIDKAEETVAELTYQKAFEIYGNPLPDIIDLRIEKELTSILGNGFAVIYLASQMLVNRSNERGYLVGSRGSVGSSFVATMIGITEVNPMPPHYVCPSCQHSEFITDGSVGSGYDLPNKPCPKCGTPYQKDGQDIPFETFLGFDGDKVPDIDLNFSGDDQPSAHLDVRDIFGAEYAFRAGTVGTVAEKTAYGFVKGYERDYGKFYRDAEVDRLAAGAAGVKRTTGQHPGGIVVIPNYMDVYDFTPVQYPADDVTASWQTTHFNFHDIDENVLKLDILGHDDPTMIRKLQDLSGIDPITIPADDPGVMALFSGTEVLGVTPEQIGTPTGMLGIPEFGTNFVRGMVNETHPTTFAELLQLSGLSHGTDVWLGNAQDLIKEGIATLKTVIGCRDDIMVYLMHAGLEPKMAFTIMERVRKGLWLKISEEERNGYIDAMRENNVPDWYIESCGKIKYMFPKAHAAAYVLMALRVAYFKVHHPIMYYCAYFSIRAKAFELKTMSGGLDAVKARMEDITIKRKNNEATNVENDLFTTLEIVNEMLERGFKFGKLDLYKSDAIEFQIKGDTLIPPFIALEGLGENVAKQIVKARQEGEFLSKMELRKRGGASSTLVEKMDEMGILGNMPEDNQLSLFDDFF</sequence>
<accession>Q1J4M0</accession>
<protein>
    <recommendedName>
        <fullName evidence="1">DNA polymerase III PolC-type</fullName>
        <shortName evidence="1">PolIII</shortName>
        <ecNumber evidence="1">2.7.7.7</ecNumber>
    </recommendedName>
</protein>
<comment type="function">
    <text evidence="1">Required for replicative DNA synthesis. This DNA polymerase also exhibits 3' to 5' exonuclease activity.</text>
</comment>
<comment type="catalytic activity">
    <reaction evidence="1">
        <text>DNA(n) + a 2'-deoxyribonucleoside 5'-triphosphate = DNA(n+1) + diphosphate</text>
        <dbReference type="Rhea" id="RHEA:22508"/>
        <dbReference type="Rhea" id="RHEA-COMP:17339"/>
        <dbReference type="Rhea" id="RHEA-COMP:17340"/>
        <dbReference type="ChEBI" id="CHEBI:33019"/>
        <dbReference type="ChEBI" id="CHEBI:61560"/>
        <dbReference type="ChEBI" id="CHEBI:173112"/>
        <dbReference type="EC" id="2.7.7.7"/>
    </reaction>
</comment>
<comment type="subcellular location">
    <subcellularLocation>
        <location evidence="1">Cytoplasm</location>
    </subcellularLocation>
</comment>
<comment type="similarity">
    <text evidence="1">Belongs to the DNA polymerase type-C family. PolC subfamily.</text>
</comment>
<name>DPO3_STRPF</name>
<feature type="chain" id="PRO_1000048487" description="DNA polymerase III PolC-type">
    <location>
        <begin position="1"/>
        <end position="1465"/>
    </location>
</feature>
<feature type="domain" description="Exonuclease">
    <location>
        <begin position="427"/>
        <end position="583"/>
    </location>
</feature>
<reference key="1">
    <citation type="journal article" date="2006" name="Proc. Natl. Acad. Sci. U.S.A.">
        <title>Molecular genetic anatomy of inter- and intraserotype variation in the human bacterial pathogen group A Streptococcus.</title>
        <authorList>
            <person name="Beres S.B."/>
            <person name="Richter E.W."/>
            <person name="Nagiec M.J."/>
            <person name="Sumby P."/>
            <person name="Porcella S.F."/>
            <person name="DeLeo F.R."/>
            <person name="Musser J.M."/>
        </authorList>
    </citation>
    <scope>NUCLEOTIDE SEQUENCE [LARGE SCALE GENOMIC DNA]</scope>
    <source>
        <strain>MGAS10750</strain>
    </source>
</reference>
<dbReference type="EC" id="2.7.7.7" evidence="1"/>
<dbReference type="EMBL" id="CP000262">
    <property type="protein sequence ID" value="ABF38716.1"/>
    <property type="molecule type" value="Genomic_DNA"/>
</dbReference>
<dbReference type="SMR" id="Q1J4M0"/>
<dbReference type="KEGG" id="spi:MGAS10750_Spy1766"/>
<dbReference type="HOGENOM" id="CLU_003297_2_0_9"/>
<dbReference type="Proteomes" id="UP000002434">
    <property type="component" value="Chromosome"/>
</dbReference>
<dbReference type="GO" id="GO:0005737">
    <property type="term" value="C:cytoplasm"/>
    <property type="evidence" value="ECO:0007669"/>
    <property type="project" value="UniProtKB-SubCell"/>
</dbReference>
<dbReference type="GO" id="GO:0008408">
    <property type="term" value="F:3'-5' exonuclease activity"/>
    <property type="evidence" value="ECO:0007669"/>
    <property type="project" value="UniProtKB-UniRule"/>
</dbReference>
<dbReference type="GO" id="GO:0003677">
    <property type="term" value="F:DNA binding"/>
    <property type="evidence" value="ECO:0007669"/>
    <property type="project" value="UniProtKB-UniRule"/>
</dbReference>
<dbReference type="GO" id="GO:0003887">
    <property type="term" value="F:DNA-directed DNA polymerase activity"/>
    <property type="evidence" value="ECO:0007669"/>
    <property type="project" value="UniProtKB-UniRule"/>
</dbReference>
<dbReference type="GO" id="GO:0006261">
    <property type="term" value="P:DNA-templated DNA replication"/>
    <property type="evidence" value="ECO:0007669"/>
    <property type="project" value="UniProtKB-UniRule"/>
</dbReference>
<dbReference type="CDD" id="cd06127">
    <property type="entry name" value="DEDDh"/>
    <property type="match status" value="1"/>
</dbReference>
<dbReference type="CDD" id="cd07435">
    <property type="entry name" value="PHP_PolIIIA_POLC"/>
    <property type="match status" value="1"/>
</dbReference>
<dbReference type="CDD" id="cd04484">
    <property type="entry name" value="polC_OBF"/>
    <property type="match status" value="1"/>
</dbReference>
<dbReference type="FunFam" id="3.30.420.10:FF:000045">
    <property type="entry name" value="3'-5' exonuclease DinG"/>
    <property type="match status" value="1"/>
</dbReference>
<dbReference type="Gene3D" id="1.10.150.870">
    <property type="match status" value="1"/>
</dbReference>
<dbReference type="Gene3D" id="3.30.1900.20">
    <property type="match status" value="1"/>
</dbReference>
<dbReference type="Gene3D" id="6.10.140.1510">
    <property type="match status" value="1"/>
</dbReference>
<dbReference type="Gene3D" id="3.20.20.140">
    <property type="entry name" value="Metal-dependent hydrolases"/>
    <property type="match status" value="1"/>
</dbReference>
<dbReference type="Gene3D" id="2.40.50.140">
    <property type="entry name" value="Nucleic acid-binding proteins"/>
    <property type="match status" value="1"/>
</dbReference>
<dbReference type="Gene3D" id="1.10.150.700">
    <property type="entry name" value="PolC, middle finger domain"/>
    <property type="match status" value="1"/>
</dbReference>
<dbReference type="Gene3D" id="3.30.420.10">
    <property type="entry name" value="Ribonuclease H-like superfamily/Ribonuclease H"/>
    <property type="match status" value="1"/>
</dbReference>
<dbReference type="HAMAP" id="MF_00356">
    <property type="entry name" value="DNApol_PolC"/>
    <property type="match status" value="1"/>
</dbReference>
<dbReference type="InterPro" id="IPR011708">
    <property type="entry name" value="DNA_pol3_alpha_NTPase_dom"/>
</dbReference>
<dbReference type="InterPro" id="IPR040982">
    <property type="entry name" value="DNA_pol3_finger"/>
</dbReference>
<dbReference type="InterPro" id="IPR024754">
    <property type="entry name" value="DNA_PolC-like_N_II"/>
</dbReference>
<dbReference type="InterPro" id="IPR028112">
    <property type="entry name" value="DNA_PolC-type_N_I"/>
</dbReference>
<dbReference type="InterPro" id="IPR004805">
    <property type="entry name" value="DnaE2/DnaE/PolC"/>
</dbReference>
<dbReference type="InterPro" id="IPR029460">
    <property type="entry name" value="DNAPol_HHH"/>
</dbReference>
<dbReference type="InterPro" id="IPR006054">
    <property type="entry name" value="DnaQ"/>
</dbReference>
<dbReference type="InterPro" id="IPR013520">
    <property type="entry name" value="Exonuclease_RNaseT/DNA_pol3"/>
</dbReference>
<dbReference type="InterPro" id="IPR012340">
    <property type="entry name" value="NA-bd_OB-fold"/>
</dbReference>
<dbReference type="InterPro" id="IPR004013">
    <property type="entry name" value="PHP_dom"/>
</dbReference>
<dbReference type="InterPro" id="IPR003141">
    <property type="entry name" value="Pol/His_phosphatase_N"/>
</dbReference>
<dbReference type="InterPro" id="IPR016195">
    <property type="entry name" value="Pol/histidinol_Pase-like"/>
</dbReference>
<dbReference type="InterPro" id="IPR006308">
    <property type="entry name" value="Pol_III_a_PolC-type_gram_pos"/>
</dbReference>
<dbReference type="InterPro" id="IPR044923">
    <property type="entry name" value="PolC_middle_finger_sf"/>
</dbReference>
<dbReference type="InterPro" id="IPR012337">
    <property type="entry name" value="RNaseH-like_sf"/>
</dbReference>
<dbReference type="InterPro" id="IPR036397">
    <property type="entry name" value="RNaseH_sf"/>
</dbReference>
<dbReference type="NCBIfam" id="TIGR00573">
    <property type="entry name" value="dnaq"/>
    <property type="match status" value="1"/>
</dbReference>
<dbReference type="NCBIfam" id="TIGR01405">
    <property type="entry name" value="polC_Gram_pos"/>
    <property type="match status" value="1"/>
</dbReference>
<dbReference type="NCBIfam" id="NF001688">
    <property type="entry name" value="PRK00448.1"/>
    <property type="match status" value="1"/>
</dbReference>
<dbReference type="PANTHER" id="PTHR32294:SF5">
    <property type="entry name" value="DNA POLYMERASE III POLC-TYPE"/>
    <property type="match status" value="1"/>
</dbReference>
<dbReference type="PANTHER" id="PTHR32294">
    <property type="entry name" value="DNA POLYMERASE III SUBUNIT ALPHA"/>
    <property type="match status" value="1"/>
</dbReference>
<dbReference type="Pfam" id="PF14480">
    <property type="entry name" value="DNA_pol3_a_NI"/>
    <property type="match status" value="1"/>
</dbReference>
<dbReference type="Pfam" id="PF11490">
    <property type="entry name" value="DNA_pol3_a_NII"/>
    <property type="match status" value="1"/>
</dbReference>
<dbReference type="Pfam" id="PF07733">
    <property type="entry name" value="DNA_pol3_alpha"/>
    <property type="match status" value="2"/>
</dbReference>
<dbReference type="Pfam" id="PF17657">
    <property type="entry name" value="DNA_pol3_finger"/>
    <property type="match status" value="1"/>
</dbReference>
<dbReference type="Pfam" id="PF14579">
    <property type="entry name" value="HHH_6"/>
    <property type="match status" value="1"/>
</dbReference>
<dbReference type="Pfam" id="PF02811">
    <property type="entry name" value="PHP"/>
    <property type="match status" value="2"/>
</dbReference>
<dbReference type="Pfam" id="PF00929">
    <property type="entry name" value="RNase_T"/>
    <property type="match status" value="1"/>
</dbReference>
<dbReference type="SMART" id="SM00479">
    <property type="entry name" value="EXOIII"/>
    <property type="match status" value="1"/>
</dbReference>
<dbReference type="SMART" id="SM00481">
    <property type="entry name" value="POLIIIAc"/>
    <property type="match status" value="1"/>
</dbReference>
<dbReference type="SUPFAM" id="SSF50249">
    <property type="entry name" value="Nucleic acid-binding proteins"/>
    <property type="match status" value="1"/>
</dbReference>
<dbReference type="SUPFAM" id="SSF89550">
    <property type="entry name" value="PHP domain-like"/>
    <property type="match status" value="1"/>
</dbReference>
<dbReference type="SUPFAM" id="SSF53098">
    <property type="entry name" value="Ribonuclease H-like"/>
    <property type="match status" value="1"/>
</dbReference>